<feature type="chain" id="PRO_0000396594" description="Lon protease">
    <location>
        <begin position="1"/>
        <end position="835"/>
    </location>
</feature>
<feature type="domain" description="Lon N-terminal" evidence="3">
    <location>
        <begin position="36"/>
        <end position="234"/>
    </location>
</feature>
<feature type="domain" description="Lon proteolytic" evidence="2">
    <location>
        <begin position="646"/>
        <end position="828"/>
    </location>
</feature>
<feature type="active site" evidence="1">
    <location>
        <position position="734"/>
    </location>
</feature>
<feature type="active site" evidence="1">
    <location>
        <position position="777"/>
    </location>
</feature>
<feature type="binding site" evidence="1">
    <location>
        <begin position="387"/>
        <end position="394"/>
    </location>
    <ligand>
        <name>ATP</name>
        <dbReference type="ChEBI" id="CHEBI:30616"/>
    </ligand>
</feature>
<gene>
    <name evidence="1" type="primary">lon</name>
    <name type="ordered locus">pc0462</name>
</gene>
<keyword id="KW-0067">ATP-binding</keyword>
<keyword id="KW-0963">Cytoplasm</keyword>
<keyword id="KW-0378">Hydrolase</keyword>
<keyword id="KW-0547">Nucleotide-binding</keyword>
<keyword id="KW-0645">Protease</keyword>
<keyword id="KW-1185">Reference proteome</keyword>
<keyword id="KW-0720">Serine protease</keyword>
<keyword id="KW-0346">Stress response</keyword>
<name>LON_PARUW</name>
<protein>
    <recommendedName>
        <fullName evidence="1">Lon protease</fullName>
        <ecNumber evidence="1">3.4.21.53</ecNumber>
    </recommendedName>
    <alternativeName>
        <fullName evidence="1">ATP-dependent protease La</fullName>
    </alternativeName>
</protein>
<evidence type="ECO:0000255" key="1">
    <source>
        <dbReference type="HAMAP-Rule" id="MF_01973"/>
    </source>
</evidence>
<evidence type="ECO:0000255" key="2">
    <source>
        <dbReference type="PROSITE-ProRule" id="PRU01122"/>
    </source>
</evidence>
<evidence type="ECO:0000255" key="3">
    <source>
        <dbReference type="PROSITE-ProRule" id="PRU01123"/>
    </source>
</evidence>
<accession>Q6ME13</accession>
<proteinExistence type="inferred from homology"/>
<comment type="function">
    <text evidence="1">ATP-dependent serine protease that mediates the selective degradation of mutant and abnormal proteins as well as certain short-lived regulatory proteins. Required for cellular homeostasis and for survival from DNA damage and developmental changes induced by stress. Degrades polypeptides processively to yield small peptide fragments that are 5 to 10 amino acids long. Binds to DNA in a double-stranded, site-specific manner.</text>
</comment>
<comment type="catalytic activity">
    <reaction evidence="1">
        <text>Hydrolysis of proteins in presence of ATP.</text>
        <dbReference type="EC" id="3.4.21.53"/>
    </reaction>
</comment>
<comment type="subunit">
    <text evidence="1">Homohexamer. Organized in a ring with a central cavity.</text>
</comment>
<comment type="subcellular location">
    <subcellularLocation>
        <location evidence="1">Cytoplasm</location>
    </subcellularLocation>
</comment>
<comment type="induction">
    <text evidence="1">By heat shock.</text>
</comment>
<comment type="similarity">
    <text evidence="1">Belongs to the peptidase S16 family.</text>
</comment>
<reference key="1">
    <citation type="journal article" date="2004" name="Science">
        <title>Illuminating the evolutionary history of chlamydiae.</title>
        <authorList>
            <person name="Horn M."/>
            <person name="Collingro A."/>
            <person name="Schmitz-Esser S."/>
            <person name="Beier C.L."/>
            <person name="Purkhold U."/>
            <person name="Fartmann B."/>
            <person name="Brandt P."/>
            <person name="Nyakatura G.J."/>
            <person name="Droege M."/>
            <person name="Frishman D."/>
            <person name="Rattei T."/>
            <person name="Mewes H.-W."/>
            <person name="Wagner M."/>
        </authorList>
    </citation>
    <scope>NUCLEOTIDE SEQUENCE [LARGE SCALE GENOMIC DNA]</scope>
    <source>
        <strain>UWE25</strain>
    </source>
</reference>
<sequence length="835" mass="94306">MLEEPIDALETEFENALNSLEDNQLSKINGQLPEQVHVFPLLRRPFFPGMAAPLVIEPGPFYEVLKVVAKSDHKCVGLVLTRSEQAEIYKVGFSDLYQIGVLARVLRIIPMEQGGAQVILNMERRIKIEKPTSETKTLKANVSYIEDDPILTTELKAYAISILSTIKELLKLNPLFKEELQIFLGHSDFTEPGKLADFAVALTTASREELQDVLETFDIRKRIDKALILLKKELDISILQHNINQKIEATINKSQKDFFLREQLKTIKKELGIERDDKSLDREKFEARLKERVVPSDVMKVITEELEKLSVLDMQSAEYSVVRGYLDWLTTIPWGIYSQENHNLEEAEKILAHDHYGLEDIKQRILEFIGVGKLAKGVRGSIICLVGPPGVGKTSIGKSIARALNRKFYRFSVGGMRDEAEIKGHRRTYVGAMPGKMIQALKYCQTMNPVIMLDEVDKMGKSFQGDPASALLEVLDPEQNAEFLDHYLDVRCNLSEVLFIVTANVLDTIPEPLKDRMDILRLSGYIMQEKLEIAKKYLIPRNRKEMGLKALEVSFTQEALRSIINGYARESGVRNLENLLKKILRKLAVNIVREQEEHDKEQAKKKKSSRSKKPIAFVPTKHSITPSNLKDFLGKPVFTSDRFYERTPVGVCMGLAWTAMGGATLYIESIKVAGEKTVMKLTGQAGDVMKESAEIAWSYVHSSIHKYAPGYTFFEKSQVHIHIPEGATPKDGPSAGITMVTSLLSLILDTPVLDNLGMTGELTLTGRVLPIGGVKEKLVAARRSGLKVLIFPKDNLRDYEELPEYIRKGITVHFVDHYDQVFKISFPNKHQMKLC</sequence>
<dbReference type="EC" id="3.4.21.53" evidence="1"/>
<dbReference type="EMBL" id="BX908798">
    <property type="protein sequence ID" value="CAF23186.1"/>
    <property type="molecule type" value="Genomic_DNA"/>
</dbReference>
<dbReference type="RefSeq" id="WP_011175012.1">
    <property type="nucleotide sequence ID" value="NC_005861.2"/>
</dbReference>
<dbReference type="SMR" id="Q6ME13"/>
<dbReference type="STRING" id="264201.pc0462"/>
<dbReference type="KEGG" id="pcu:PC_RS02245"/>
<dbReference type="eggNOG" id="COG0466">
    <property type="taxonomic scope" value="Bacteria"/>
</dbReference>
<dbReference type="HOGENOM" id="CLU_004109_4_3_0"/>
<dbReference type="OrthoDB" id="9803599at2"/>
<dbReference type="Proteomes" id="UP000000529">
    <property type="component" value="Chromosome"/>
</dbReference>
<dbReference type="GO" id="GO:0005737">
    <property type="term" value="C:cytoplasm"/>
    <property type="evidence" value="ECO:0007669"/>
    <property type="project" value="UniProtKB-SubCell"/>
</dbReference>
<dbReference type="GO" id="GO:0005524">
    <property type="term" value="F:ATP binding"/>
    <property type="evidence" value="ECO:0007669"/>
    <property type="project" value="UniProtKB-UniRule"/>
</dbReference>
<dbReference type="GO" id="GO:0016887">
    <property type="term" value="F:ATP hydrolysis activity"/>
    <property type="evidence" value="ECO:0007669"/>
    <property type="project" value="UniProtKB-UniRule"/>
</dbReference>
<dbReference type="GO" id="GO:0004176">
    <property type="term" value="F:ATP-dependent peptidase activity"/>
    <property type="evidence" value="ECO:0007669"/>
    <property type="project" value="UniProtKB-UniRule"/>
</dbReference>
<dbReference type="GO" id="GO:0043565">
    <property type="term" value="F:sequence-specific DNA binding"/>
    <property type="evidence" value="ECO:0007669"/>
    <property type="project" value="UniProtKB-UniRule"/>
</dbReference>
<dbReference type="GO" id="GO:0004252">
    <property type="term" value="F:serine-type endopeptidase activity"/>
    <property type="evidence" value="ECO:0007669"/>
    <property type="project" value="UniProtKB-UniRule"/>
</dbReference>
<dbReference type="GO" id="GO:0034605">
    <property type="term" value="P:cellular response to heat"/>
    <property type="evidence" value="ECO:0007669"/>
    <property type="project" value="UniProtKB-UniRule"/>
</dbReference>
<dbReference type="GO" id="GO:0006515">
    <property type="term" value="P:protein quality control for misfolded or incompletely synthesized proteins"/>
    <property type="evidence" value="ECO:0007669"/>
    <property type="project" value="UniProtKB-UniRule"/>
</dbReference>
<dbReference type="CDD" id="cd19500">
    <property type="entry name" value="RecA-like_Lon"/>
    <property type="match status" value="1"/>
</dbReference>
<dbReference type="FunFam" id="3.40.50.300:FF:000021">
    <property type="entry name" value="Lon protease homolog"/>
    <property type="match status" value="1"/>
</dbReference>
<dbReference type="FunFam" id="1.20.5.5270:FF:000001">
    <property type="entry name" value="Lon protease homolog, mitochondrial"/>
    <property type="match status" value="1"/>
</dbReference>
<dbReference type="FunFam" id="1.20.58.1480:FF:000002">
    <property type="entry name" value="Lon protease homolog, mitochondrial"/>
    <property type="match status" value="1"/>
</dbReference>
<dbReference type="FunFam" id="3.30.230.10:FF:000015">
    <property type="entry name" value="Lon protease homolog, mitochondrial"/>
    <property type="match status" value="1"/>
</dbReference>
<dbReference type="Gene3D" id="1.10.8.60">
    <property type="match status" value="1"/>
</dbReference>
<dbReference type="Gene3D" id="1.20.5.5270">
    <property type="match status" value="1"/>
</dbReference>
<dbReference type="Gene3D" id="1.20.58.1480">
    <property type="match status" value="1"/>
</dbReference>
<dbReference type="Gene3D" id="3.30.230.10">
    <property type="match status" value="1"/>
</dbReference>
<dbReference type="Gene3D" id="2.30.130.40">
    <property type="entry name" value="LON domain-like"/>
    <property type="match status" value="1"/>
</dbReference>
<dbReference type="Gene3D" id="3.40.50.300">
    <property type="entry name" value="P-loop containing nucleotide triphosphate hydrolases"/>
    <property type="match status" value="1"/>
</dbReference>
<dbReference type="HAMAP" id="MF_01973">
    <property type="entry name" value="lon_bact"/>
    <property type="match status" value="1"/>
</dbReference>
<dbReference type="InterPro" id="IPR003593">
    <property type="entry name" value="AAA+_ATPase"/>
</dbReference>
<dbReference type="InterPro" id="IPR003959">
    <property type="entry name" value="ATPase_AAA_core"/>
</dbReference>
<dbReference type="InterPro" id="IPR027543">
    <property type="entry name" value="Lon_bac"/>
</dbReference>
<dbReference type="InterPro" id="IPR004815">
    <property type="entry name" value="Lon_bac/euk-typ"/>
</dbReference>
<dbReference type="InterPro" id="IPR054594">
    <property type="entry name" value="Lon_lid"/>
</dbReference>
<dbReference type="InterPro" id="IPR008269">
    <property type="entry name" value="Lon_proteolytic"/>
</dbReference>
<dbReference type="InterPro" id="IPR027065">
    <property type="entry name" value="Lon_Prtase"/>
</dbReference>
<dbReference type="InterPro" id="IPR003111">
    <property type="entry name" value="Lon_prtase_N"/>
</dbReference>
<dbReference type="InterPro" id="IPR046336">
    <property type="entry name" value="Lon_prtase_N_sf"/>
</dbReference>
<dbReference type="InterPro" id="IPR027417">
    <property type="entry name" value="P-loop_NTPase"/>
</dbReference>
<dbReference type="InterPro" id="IPR008268">
    <property type="entry name" value="Peptidase_S16_AS"/>
</dbReference>
<dbReference type="InterPro" id="IPR015947">
    <property type="entry name" value="PUA-like_sf"/>
</dbReference>
<dbReference type="InterPro" id="IPR020568">
    <property type="entry name" value="Ribosomal_Su5_D2-typ_SF"/>
</dbReference>
<dbReference type="InterPro" id="IPR014721">
    <property type="entry name" value="Ribsml_uS5_D2-typ_fold_subgr"/>
</dbReference>
<dbReference type="NCBIfam" id="TIGR00763">
    <property type="entry name" value="lon"/>
    <property type="match status" value="1"/>
</dbReference>
<dbReference type="PANTHER" id="PTHR43718">
    <property type="entry name" value="LON PROTEASE"/>
    <property type="match status" value="1"/>
</dbReference>
<dbReference type="PANTHER" id="PTHR43718:SF2">
    <property type="entry name" value="LON PROTEASE HOMOLOG, MITOCHONDRIAL"/>
    <property type="match status" value="1"/>
</dbReference>
<dbReference type="Pfam" id="PF00004">
    <property type="entry name" value="AAA"/>
    <property type="match status" value="1"/>
</dbReference>
<dbReference type="Pfam" id="PF05362">
    <property type="entry name" value="Lon_C"/>
    <property type="match status" value="1"/>
</dbReference>
<dbReference type="Pfam" id="PF22667">
    <property type="entry name" value="Lon_lid"/>
    <property type="match status" value="1"/>
</dbReference>
<dbReference type="Pfam" id="PF02190">
    <property type="entry name" value="LON_substr_bdg"/>
    <property type="match status" value="1"/>
</dbReference>
<dbReference type="PIRSF" id="PIRSF001174">
    <property type="entry name" value="Lon_proteas"/>
    <property type="match status" value="1"/>
</dbReference>
<dbReference type="PRINTS" id="PR00830">
    <property type="entry name" value="ENDOLAPTASE"/>
</dbReference>
<dbReference type="SMART" id="SM00382">
    <property type="entry name" value="AAA"/>
    <property type="match status" value="1"/>
</dbReference>
<dbReference type="SMART" id="SM00464">
    <property type="entry name" value="LON"/>
    <property type="match status" value="1"/>
</dbReference>
<dbReference type="SUPFAM" id="SSF52540">
    <property type="entry name" value="P-loop containing nucleoside triphosphate hydrolases"/>
    <property type="match status" value="1"/>
</dbReference>
<dbReference type="SUPFAM" id="SSF88697">
    <property type="entry name" value="PUA domain-like"/>
    <property type="match status" value="1"/>
</dbReference>
<dbReference type="SUPFAM" id="SSF54211">
    <property type="entry name" value="Ribosomal protein S5 domain 2-like"/>
    <property type="match status" value="1"/>
</dbReference>
<dbReference type="PROSITE" id="PS51787">
    <property type="entry name" value="LON_N"/>
    <property type="match status" value="1"/>
</dbReference>
<dbReference type="PROSITE" id="PS51786">
    <property type="entry name" value="LON_PROTEOLYTIC"/>
    <property type="match status" value="1"/>
</dbReference>
<dbReference type="PROSITE" id="PS01046">
    <property type="entry name" value="LON_SER"/>
    <property type="match status" value="1"/>
</dbReference>
<organism>
    <name type="scientific">Protochlamydia amoebophila (strain UWE25)</name>
    <dbReference type="NCBI Taxonomy" id="264201"/>
    <lineage>
        <taxon>Bacteria</taxon>
        <taxon>Pseudomonadati</taxon>
        <taxon>Chlamydiota</taxon>
        <taxon>Chlamydiia</taxon>
        <taxon>Parachlamydiales</taxon>
        <taxon>Parachlamydiaceae</taxon>
        <taxon>Candidatus Protochlamydia</taxon>
    </lineage>
</organism>